<sequence length="742" mass="86365">MPTPSAQLDQGIISSNGGTSGVSASSTRFRHRKISVKQKLRVYKASDLKDLDQDELQQRELQEIETGVEKNEEREVHLHKILQKNQLQLQDLYIPTPDASRVWKEFDEMYQGRFTTPASYIQFSVQLEDCCGPAYNMDERDEAYLAELNGGESEALTEDEFELLMTNFESAIRERQPFLAMDPESLLMYEDLKPTMLKNDIGDAGLKTELAAELQLGDQPFVTKFDSPATLRTRNMVELIEKYGAEVYEYWKKRKVEVAGGSIIPSLKAERSTDKDDNDPYFCFRRREVRQTRKTRRVDTQNSQKLRLLYQQLQYTKELALLVAKREKMSMDMLLRDREIFQLRCDIKTVKRGLGIKGEDELLISQKRRKLVSNVITNKKYVSTQADAAALRRLRVAKVKDKKLLSKQLSSTDLKRQQSQLQKLDQQQRQQQQQQQPQINGAQCQQDGSGVSHVYVKLPTSKIPDIVLEDVDKVLSMKERNTKRFVEEKMKKRREEDGDIFFNLTDDPYNPVFEITIPQNISPTNAPFSSIVSSNFEISRSYYTPNLQNCITGNTNSVLAYNKEGEIVESQKYKKIEFYSPFEEKNDSHTREIPVRFRRRLGRYGVEYIDRKDVSRNPSDLLGEFMDFSLIAEQEQSSDAVNVYDSQLDELFRLHDKWKYDSDHNAYGIKFSDEPSRLNQISNETQVIRFGTMLGTKSYEQLREATLKYRQNVMAQRKKLVNAQRQQQQQQQEQQEQEHQQA</sequence>
<gene>
    <name type="primary">EPL1</name>
    <name type="ordered locus">AFR520W</name>
</gene>
<protein>
    <recommendedName>
        <fullName>Enhancer of polycomb-like protein 1</fullName>
    </recommendedName>
</protein>
<reference key="1">
    <citation type="journal article" date="2004" name="Science">
        <title>The Ashbya gossypii genome as a tool for mapping the ancient Saccharomyces cerevisiae genome.</title>
        <authorList>
            <person name="Dietrich F.S."/>
            <person name="Voegeli S."/>
            <person name="Brachat S."/>
            <person name="Lerch A."/>
            <person name="Gates K."/>
            <person name="Steiner S."/>
            <person name="Mohr C."/>
            <person name="Poehlmann R."/>
            <person name="Luedi P."/>
            <person name="Choi S."/>
            <person name="Wing R.A."/>
            <person name="Flavier A."/>
            <person name="Gaffney T.D."/>
            <person name="Philippsen P."/>
        </authorList>
    </citation>
    <scope>NUCLEOTIDE SEQUENCE [LARGE SCALE GENOMIC DNA]</scope>
    <source>
        <strain>ATCC 10895 / CBS 109.51 / FGSC 9923 / NRRL Y-1056</strain>
    </source>
</reference>
<reference key="2">
    <citation type="journal article" date="2013" name="G3 (Bethesda)">
        <title>Genomes of Ashbya fungi isolated from insects reveal four mating-type loci, numerous translocations, lack of transposons, and distinct gene duplications.</title>
        <authorList>
            <person name="Dietrich F.S."/>
            <person name="Voegeli S."/>
            <person name="Kuo S."/>
            <person name="Philippsen P."/>
        </authorList>
    </citation>
    <scope>GENOME REANNOTATION</scope>
    <scope>SEQUENCE REVISION TO 353</scope>
    <source>
        <strain>ATCC 10895 / CBS 109.51 / FGSC 9923 / NRRL Y-1056</strain>
    </source>
</reference>
<dbReference type="EMBL" id="AE016819">
    <property type="protein sequence ID" value="AAS53891.2"/>
    <property type="molecule type" value="Genomic_DNA"/>
</dbReference>
<dbReference type="RefSeq" id="NP_986067.2">
    <property type="nucleotide sequence ID" value="NM_212203.2"/>
</dbReference>
<dbReference type="SMR" id="Q752Q3"/>
<dbReference type="FunCoup" id="Q752Q3">
    <property type="interactions" value="298"/>
</dbReference>
<dbReference type="STRING" id="284811.Q752Q3"/>
<dbReference type="EnsemblFungi" id="AAS53891">
    <property type="protein sequence ID" value="AAS53891"/>
    <property type="gene ID" value="AGOS_AFR520W"/>
</dbReference>
<dbReference type="GeneID" id="4622346"/>
<dbReference type="KEGG" id="ago:AGOS_AFR520W"/>
<dbReference type="eggNOG" id="KOG2261">
    <property type="taxonomic scope" value="Eukaryota"/>
</dbReference>
<dbReference type="HOGENOM" id="CLU_010580_0_0_1"/>
<dbReference type="InParanoid" id="Q752Q3"/>
<dbReference type="OMA" id="MLGTKSY"/>
<dbReference type="OrthoDB" id="435275at2759"/>
<dbReference type="Proteomes" id="UP000000591">
    <property type="component" value="Chromosome VI"/>
</dbReference>
<dbReference type="GO" id="GO:0035267">
    <property type="term" value="C:NuA4 histone acetyltransferase complex"/>
    <property type="evidence" value="ECO:0007669"/>
    <property type="project" value="EnsemblFungi"/>
</dbReference>
<dbReference type="GO" id="GO:0000786">
    <property type="term" value="C:nucleosome"/>
    <property type="evidence" value="ECO:0007669"/>
    <property type="project" value="EnsemblFungi"/>
</dbReference>
<dbReference type="GO" id="GO:0005634">
    <property type="term" value="C:nucleus"/>
    <property type="evidence" value="ECO:0007669"/>
    <property type="project" value="UniProtKB-SubCell"/>
</dbReference>
<dbReference type="GO" id="GO:0032777">
    <property type="term" value="C:piccolo histone acetyltransferase complex"/>
    <property type="evidence" value="ECO:0000318"/>
    <property type="project" value="GO_Central"/>
</dbReference>
<dbReference type="GO" id="GO:0004402">
    <property type="term" value="F:histone acetyltransferase activity"/>
    <property type="evidence" value="ECO:0007669"/>
    <property type="project" value="EnsemblFungi"/>
</dbReference>
<dbReference type="GO" id="GO:0006281">
    <property type="term" value="P:DNA repair"/>
    <property type="evidence" value="ECO:0007669"/>
    <property type="project" value="UniProtKB-KW"/>
</dbReference>
<dbReference type="GO" id="GO:0016239">
    <property type="term" value="P:positive regulation of macroautophagy"/>
    <property type="evidence" value="ECO:0007669"/>
    <property type="project" value="EnsemblFungi"/>
</dbReference>
<dbReference type="GO" id="GO:0006357">
    <property type="term" value="P:regulation of transcription by RNA polymerase II"/>
    <property type="evidence" value="ECO:0000318"/>
    <property type="project" value="GO_Central"/>
</dbReference>
<dbReference type="InterPro" id="IPR024943">
    <property type="entry name" value="Enhancer_polycomb"/>
</dbReference>
<dbReference type="InterPro" id="IPR019542">
    <property type="entry name" value="Enhancer_polycomb-like_N"/>
</dbReference>
<dbReference type="PANTHER" id="PTHR14898">
    <property type="entry name" value="ENHANCER OF POLYCOMB"/>
    <property type="match status" value="1"/>
</dbReference>
<dbReference type="Pfam" id="PF10513">
    <property type="entry name" value="EPL1"/>
    <property type="match status" value="1"/>
</dbReference>
<evidence type="ECO:0000250" key="1"/>
<evidence type="ECO:0000256" key="2">
    <source>
        <dbReference type="SAM" id="MobiDB-lite"/>
    </source>
</evidence>
<evidence type="ECO:0000305" key="3"/>
<organism>
    <name type="scientific">Eremothecium gossypii (strain ATCC 10895 / CBS 109.51 / FGSC 9923 / NRRL Y-1056)</name>
    <name type="common">Yeast</name>
    <name type="synonym">Ashbya gossypii</name>
    <dbReference type="NCBI Taxonomy" id="284811"/>
    <lineage>
        <taxon>Eukaryota</taxon>
        <taxon>Fungi</taxon>
        <taxon>Dikarya</taxon>
        <taxon>Ascomycota</taxon>
        <taxon>Saccharomycotina</taxon>
        <taxon>Saccharomycetes</taxon>
        <taxon>Saccharomycetales</taxon>
        <taxon>Saccharomycetaceae</taxon>
        <taxon>Eremothecium</taxon>
    </lineage>
</organism>
<keyword id="KW-0131">Cell cycle</keyword>
<keyword id="KW-0227">DNA damage</keyword>
<keyword id="KW-0234">DNA repair</keyword>
<keyword id="KW-0539">Nucleus</keyword>
<keyword id="KW-1185">Reference proteome</keyword>
<keyword id="KW-0804">Transcription</keyword>
<keyword id="KW-0805">Transcription regulation</keyword>
<name>EPL1_EREGS</name>
<feature type="chain" id="PRO_0000214155" description="Enhancer of polycomb-like protein 1">
    <location>
        <begin position="1"/>
        <end position="742"/>
    </location>
</feature>
<feature type="region of interest" description="Disordered" evidence="2">
    <location>
        <begin position="1"/>
        <end position="28"/>
    </location>
</feature>
<feature type="region of interest" description="Disordered" evidence="2">
    <location>
        <begin position="416"/>
        <end position="446"/>
    </location>
</feature>
<feature type="region of interest" description="Disordered" evidence="2">
    <location>
        <begin position="718"/>
        <end position="742"/>
    </location>
</feature>
<feature type="compositionally biased region" description="Polar residues" evidence="2">
    <location>
        <begin position="1"/>
        <end position="27"/>
    </location>
</feature>
<feature type="compositionally biased region" description="Low complexity" evidence="2">
    <location>
        <begin position="724"/>
        <end position="734"/>
    </location>
</feature>
<proteinExistence type="inferred from homology"/>
<accession>Q752Q3</accession>
<comment type="function">
    <text evidence="1">Component of the NuA4 histone acetyltransferase complex which is involved in transcriptional activation of selected genes principally by acetylation of nucleosomal histone H4 and H2A. The NuA4 complex is also involved in DNA repair. Involved in gene silencing by neighboring heterochromatin, blockage of the silencing spreading along the chromosome, and required for cell cycle progression through G2/M (By similarity).</text>
</comment>
<comment type="subunit">
    <text evidence="1">Component of the NuA4 histone acetyltransferase complex.</text>
</comment>
<comment type="subcellular location">
    <subcellularLocation>
        <location evidence="1">Nucleus</location>
    </subcellularLocation>
</comment>
<comment type="similarity">
    <text evidence="3">Belongs to the enhancer of polycomb family.</text>
</comment>